<accession>Q49KZ4</accession>
<proteinExistence type="inferred from homology"/>
<name>NDHK_EUCGG</name>
<reference key="1">
    <citation type="journal article" date="2005" name="DNA Res.">
        <title>Complete nucleotide sequence of the chloroplast genome from the Tasmanian blue gum, Eucalyptus globulus (Myrtaceae).</title>
        <authorList>
            <person name="Steane D.A."/>
        </authorList>
    </citation>
    <scope>NUCLEOTIDE SEQUENCE [LARGE SCALE GENOMIC DNA]</scope>
</reference>
<organism>
    <name type="scientific">Eucalyptus globulus subsp. globulus</name>
    <name type="common">Tasmanian blue gum</name>
    <dbReference type="NCBI Taxonomy" id="71271"/>
    <lineage>
        <taxon>Eukaryota</taxon>
        <taxon>Viridiplantae</taxon>
        <taxon>Streptophyta</taxon>
        <taxon>Embryophyta</taxon>
        <taxon>Tracheophyta</taxon>
        <taxon>Spermatophyta</taxon>
        <taxon>Magnoliopsida</taxon>
        <taxon>eudicotyledons</taxon>
        <taxon>Gunneridae</taxon>
        <taxon>Pentapetalae</taxon>
        <taxon>rosids</taxon>
        <taxon>malvids</taxon>
        <taxon>Myrtales</taxon>
        <taxon>Myrtaceae</taxon>
        <taxon>Myrtoideae</taxon>
        <taxon>Eucalypteae</taxon>
        <taxon>Eucalyptus</taxon>
    </lineage>
</organism>
<feature type="chain" id="PRO_0000358543" description="NAD(P)H-quinone oxidoreductase subunit K, chloroplastic">
    <location>
        <begin position="1"/>
        <end position="225"/>
    </location>
</feature>
<feature type="binding site" evidence="1">
    <location>
        <position position="43"/>
    </location>
    <ligand>
        <name>[4Fe-4S] cluster</name>
        <dbReference type="ChEBI" id="CHEBI:49883"/>
    </ligand>
</feature>
<feature type="binding site" evidence="1">
    <location>
        <position position="44"/>
    </location>
    <ligand>
        <name>[4Fe-4S] cluster</name>
        <dbReference type="ChEBI" id="CHEBI:49883"/>
    </ligand>
</feature>
<feature type="binding site" evidence="1">
    <location>
        <position position="108"/>
    </location>
    <ligand>
        <name>[4Fe-4S] cluster</name>
        <dbReference type="ChEBI" id="CHEBI:49883"/>
    </ligand>
</feature>
<feature type="binding site" evidence="1">
    <location>
        <position position="139"/>
    </location>
    <ligand>
        <name>[4Fe-4S] cluster</name>
        <dbReference type="ChEBI" id="CHEBI:49883"/>
    </ligand>
</feature>
<comment type="function">
    <text evidence="1">NDH shuttles electrons from NAD(P)H:plastoquinone, via FMN and iron-sulfur (Fe-S) centers, to quinones in the photosynthetic chain and possibly in a chloroplast respiratory chain. The immediate electron acceptor for the enzyme in this species is believed to be plastoquinone. Couples the redox reaction to proton translocation, and thus conserves the redox energy in a proton gradient.</text>
</comment>
<comment type="catalytic activity">
    <reaction evidence="1">
        <text>a plastoquinone + NADH + (n+1) H(+)(in) = a plastoquinol + NAD(+) + n H(+)(out)</text>
        <dbReference type="Rhea" id="RHEA:42608"/>
        <dbReference type="Rhea" id="RHEA-COMP:9561"/>
        <dbReference type="Rhea" id="RHEA-COMP:9562"/>
        <dbReference type="ChEBI" id="CHEBI:15378"/>
        <dbReference type="ChEBI" id="CHEBI:17757"/>
        <dbReference type="ChEBI" id="CHEBI:57540"/>
        <dbReference type="ChEBI" id="CHEBI:57945"/>
        <dbReference type="ChEBI" id="CHEBI:62192"/>
    </reaction>
</comment>
<comment type="catalytic activity">
    <reaction evidence="1">
        <text>a plastoquinone + NADPH + (n+1) H(+)(in) = a plastoquinol + NADP(+) + n H(+)(out)</text>
        <dbReference type="Rhea" id="RHEA:42612"/>
        <dbReference type="Rhea" id="RHEA-COMP:9561"/>
        <dbReference type="Rhea" id="RHEA-COMP:9562"/>
        <dbReference type="ChEBI" id="CHEBI:15378"/>
        <dbReference type="ChEBI" id="CHEBI:17757"/>
        <dbReference type="ChEBI" id="CHEBI:57783"/>
        <dbReference type="ChEBI" id="CHEBI:58349"/>
        <dbReference type="ChEBI" id="CHEBI:62192"/>
    </reaction>
</comment>
<comment type="cofactor">
    <cofactor evidence="1">
        <name>[4Fe-4S] cluster</name>
        <dbReference type="ChEBI" id="CHEBI:49883"/>
    </cofactor>
    <text evidence="1">Binds 1 [4Fe-4S] cluster.</text>
</comment>
<comment type="subunit">
    <text evidence="1">NDH is composed of at least 16 different subunits, 5 of which are encoded in the nucleus.</text>
</comment>
<comment type="subcellular location">
    <subcellularLocation>
        <location evidence="1">Plastid</location>
        <location evidence="1">Chloroplast thylakoid membrane</location>
        <topology evidence="1">Peripheral membrane protein</topology>
        <orientation evidence="1">Stromal side</orientation>
    </subcellularLocation>
</comment>
<comment type="similarity">
    <text evidence="1">Belongs to the complex I 20 kDa subunit family.</text>
</comment>
<comment type="sequence caution" evidence="2">
    <conflict type="erroneous initiation">
        <sequence resource="EMBL-CDS" id="AAX21033"/>
    </conflict>
</comment>
<evidence type="ECO:0000255" key="1">
    <source>
        <dbReference type="HAMAP-Rule" id="MF_01356"/>
    </source>
</evidence>
<evidence type="ECO:0000305" key="2"/>
<sequence length="225" mass="25308">MNSIEFPLLARTTQNSVISTTLNDLSNWSRLSSLWPLLYGTSCCFIEFASLIGSRFDFDRYGLVPRSSPRQADLILTAGTVTMKMAPSLVRLYEQMPEPKYVIAMGACTITGGMFSTDSYSTVRGVDKLIPVDVYLPGCPPKPEAVIDAITKLRKKIAREIYEERIRSQEENRCFTTNHKFHVGRSIHTGNYDQGLLYQSPSTSEIPPETFFKYKSSVSSHELVN</sequence>
<dbReference type="EC" id="7.1.1.-" evidence="1"/>
<dbReference type="EMBL" id="AY780259">
    <property type="protein sequence ID" value="AAX21033.1"/>
    <property type="status" value="ALT_INIT"/>
    <property type="molecule type" value="Genomic_DNA"/>
</dbReference>
<dbReference type="RefSeq" id="YP_636303.1">
    <property type="nucleotide sequence ID" value="NC_008115.1"/>
</dbReference>
<dbReference type="SMR" id="Q49KZ4"/>
<dbReference type="GeneID" id="4108454"/>
<dbReference type="GO" id="GO:0009535">
    <property type="term" value="C:chloroplast thylakoid membrane"/>
    <property type="evidence" value="ECO:0007669"/>
    <property type="project" value="UniProtKB-SubCell"/>
</dbReference>
<dbReference type="GO" id="GO:0045271">
    <property type="term" value="C:respiratory chain complex I"/>
    <property type="evidence" value="ECO:0007669"/>
    <property type="project" value="TreeGrafter"/>
</dbReference>
<dbReference type="GO" id="GO:0051539">
    <property type="term" value="F:4 iron, 4 sulfur cluster binding"/>
    <property type="evidence" value="ECO:0007669"/>
    <property type="project" value="UniProtKB-KW"/>
</dbReference>
<dbReference type="GO" id="GO:0005506">
    <property type="term" value="F:iron ion binding"/>
    <property type="evidence" value="ECO:0007669"/>
    <property type="project" value="UniProtKB-UniRule"/>
</dbReference>
<dbReference type="GO" id="GO:0008137">
    <property type="term" value="F:NADH dehydrogenase (ubiquinone) activity"/>
    <property type="evidence" value="ECO:0007669"/>
    <property type="project" value="InterPro"/>
</dbReference>
<dbReference type="GO" id="GO:0048038">
    <property type="term" value="F:quinone binding"/>
    <property type="evidence" value="ECO:0007669"/>
    <property type="project" value="UniProtKB-KW"/>
</dbReference>
<dbReference type="GO" id="GO:0009060">
    <property type="term" value="P:aerobic respiration"/>
    <property type="evidence" value="ECO:0007669"/>
    <property type="project" value="TreeGrafter"/>
</dbReference>
<dbReference type="GO" id="GO:0015990">
    <property type="term" value="P:electron transport coupled proton transport"/>
    <property type="evidence" value="ECO:0007669"/>
    <property type="project" value="TreeGrafter"/>
</dbReference>
<dbReference type="GO" id="GO:0019684">
    <property type="term" value="P:photosynthesis, light reaction"/>
    <property type="evidence" value="ECO:0007669"/>
    <property type="project" value="UniProtKB-UniRule"/>
</dbReference>
<dbReference type="FunFam" id="3.40.50.12280:FF:000003">
    <property type="entry name" value="NAD(P)H-quinone oxidoreductase subunit K, chloroplastic"/>
    <property type="match status" value="1"/>
</dbReference>
<dbReference type="Gene3D" id="3.40.50.12280">
    <property type="match status" value="1"/>
</dbReference>
<dbReference type="HAMAP" id="MF_01356">
    <property type="entry name" value="NDH1_NuoB"/>
    <property type="match status" value="1"/>
</dbReference>
<dbReference type="InterPro" id="IPR006137">
    <property type="entry name" value="NADH_UbQ_OxRdtase-like_20kDa"/>
</dbReference>
<dbReference type="InterPro" id="IPR006138">
    <property type="entry name" value="NADH_UQ_OxRdtase_20Kd_su"/>
</dbReference>
<dbReference type="NCBIfam" id="TIGR01957">
    <property type="entry name" value="nuoB_fam"/>
    <property type="match status" value="1"/>
</dbReference>
<dbReference type="NCBIfam" id="NF005012">
    <property type="entry name" value="PRK06411.1"/>
    <property type="match status" value="1"/>
</dbReference>
<dbReference type="PANTHER" id="PTHR11995">
    <property type="entry name" value="NADH DEHYDROGENASE"/>
    <property type="match status" value="1"/>
</dbReference>
<dbReference type="PANTHER" id="PTHR11995:SF14">
    <property type="entry name" value="NADH DEHYDROGENASE [UBIQUINONE] IRON-SULFUR PROTEIN 7, MITOCHONDRIAL"/>
    <property type="match status" value="1"/>
</dbReference>
<dbReference type="Pfam" id="PF01058">
    <property type="entry name" value="Oxidored_q6"/>
    <property type="match status" value="1"/>
</dbReference>
<dbReference type="SUPFAM" id="SSF56770">
    <property type="entry name" value="HydA/Nqo6-like"/>
    <property type="match status" value="1"/>
</dbReference>
<dbReference type="PROSITE" id="PS01150">
    <property type="entry name" value="COMPLEX1_20K"/>
    <property type="match status" value="1"/>
</dbReference>
<keyword id="KW-0004">4Fe-4S</keyword>
<keyword id="KW-0150">Chloroplast</keyword>
<keyword id="KW-0408">Iron</keyword>
<keyword id="KW-0411">Iron-sulfur</keyword>
<keyword id="KW-0472">Membrane</keyword>
<keyword id="KW-0479">Metal-binding</keyword>
<keyword id="KW-0520">NAD</keyword>
<keyword id="KW-0521">NADP</keyword>
<keyword id="KW-0934">Plastid</keyword>
<keyword id="KW-0618">Plastoquinone</keyword>
<keyword id="KW-0874">Quinone</keyword>
<keyword id="KW-0793">Thylakoid</keyword>
<keyword id="KW-1278">Translocase</keyword>
<keyword id="KW-0813">Transport</keyword>
<protein>
    <recommendedName>
        <fullName evidence="1">NAD(P)H-quinone oxidoreductase subunit K, chloroplastic</fullName>
        <ecNumber evidence="1">7.1.1.-</ecNumber>
    </recommendedName>
    <alternativeName>
        <fullName evidence="1">NAD(P)H dehydrogenase subunit K</fullName>
    </alternativeName>
    <alternativeName>
        <fullName evidence="1">NADH-plastoquinone oxidoreductase subunit K</fullName>
    </alternativeName>
</protein>
<geneLocation type="chloroplast"/>
<gene>
    <name evidence="1" type="primary">ndhK</name>
</gene>